<comment type="function">
    <text evidence="3">Part of the elfADCG-ycbUVF fimbrial operon, which promotes adhesion of bacteria to different abiotic surfaces. Could be involved in the export and assembly of the ElfA fimbrial subunits across the outer membrane.</text>
</comment>
<comment type="subcellular location">
    <subcellularLocation>
        <location evidence="1">Cell outer membrane</location>
        <topology evidence="1">Multi-pass membrane protein</topology>
    </subcellularLocation>
</comment>
<comment type="induction">
    <text evidence="3">Expression is negatively regulated by H-NS and subjected to cAMP receptor protein (CRP)-mediated catabolite repression.</text>
</comment>
<comment type="miscellaneous">
    <text evidence="5">The operon is cryptic under classical laboratory conditions, but is functional when constitutively expressed.</text>
</comment>
<comment type="similarity">
    <text evidence="4">Belongs to the fimbrial export usher family.</text>
</comment>
<gene>
    <name type="primary">elfC</name>
    <name type="synonym">ycbS</name>
    <name type="ordered locus">b0940</name>
    <name type="ordered locus">JW0923</name>
</gene>
<sequence>MYRTHRQHSLLSSGGVPSFIGGLVVFVSAAFNAQAETWFDPAFFKDDPSMVADLSRFEKGQKITPGVYRVDIVLNQTIVDTRNVNFVEITPEKGIAACLTTESLDAMGVNTDAFPAFKQLDKQACVPLAEIIPDASVTFNVNKLRLEISVPQIAIKSNARGYVPPERWDEGINALLLGYSFSGANSIHSSADSDSGDSYFLNLNSGVNLGPWRLRNNSTWSRSSGQTAEWKNLSSYLQRAVIPLKGELTVGDDYTAGDFFDSVSFRGVQLASDDNMLPDSLKGFAPVVRGIAKSNAQITIKQNGYTIYQTYVSPGAFEISDLYSTSSSGDLLVEIKEADGSVNSYSVPFSSVPLLQRQGRIKYAVTLAKYRTNSNEQQESKFAQATLQWGGPWGTTWYGGGQYAEYYRAAMFGLGFNLGDFGAISFDATQAKSTLADQSEHKGQSYRFLYAKTLNHLGTNFQLMGYRYSTSGFYTLSDTMYKHMDGYEFNDGDDEDTPMWSRYYNLFYTKRGKLQVNISQQLGEYGSFYLSGSQQTYWHTDQQDRLLQFGYNTQIKDLSLGISWNYSKSRGQPDADQVFALNFSLPLNLLLPRSNDSYTRKKNYAWMTSNTSIDNEGHTTQNLGLTETLLDDGNLSYSVQQGYNSEGKTANGSASMDYKGAFADARVGYNYSDNGSQQQLNYALSGSLVAHSQGITLGQSLGETNVLIAAPGAENTRVANSTGLKTDWRGYTVVPYATSYRENRIALDAASLKRNVDLENAVVNVVPTKGALVLAEFNAHAGARVLMKTSKQGIPLRFGAIATLDGVQANSGIIDDDGSLYMAGLPAKGTISVRWGEAPDQICHINYELTEQQINSAITRMDAICR</sequence>
<name>ELFC_ECOLI</name>
<protein>
    <recommendedName>
        <fullName>Probable outer membrane usher protein ElfC</fullName>
    </recommendedName>
</protein>
<evidence type="ECO:0000250" key="1"/>
<evidence type="ECO:0000255" key="2"/>
<evidence type="ECO:0000269" key="3">
    <source>
    </source>
</evidence>
<evidence type="ECO:0000305" key="4"/>
<evidence type="ECO:0000305" key="5">
    <source>
    </source>
</evidence>
<accession>P75857</accession>
<feature type="signal peptide" evidence="2">
    <location>
        <begin position="1"/>
        <end position="35"/>
    </location>
</feature>
<feature type="chain" id="PRO_0000009330" description="Probable outer membrane usher protein ElfC">
    <location>
        <begin position="36"/>
        <end position="866"/>
    </location>
</feature>
<dbReference type="EMBL" id="U00096">
    <property type="protein sequence ID" value="AAC74026.1"/>
    <property type="molecule type" value="Genomic_DNA"/>
</dbReference>
<dbReference type="EMBL" id="AP009048">
    <property type="protein sequence ID" value="BAA35695.1"/>
    <property type="molecule type" value="Genomic_DNA"/>
</dbReference>
<dbReference type="PIR" id="C64834">
    <property type="entry name" value="C64834"/>
</dbReference>
<dbReference type="RefSeq" id="NP_415460.1">
    <property type="nucleotide sequence ID" value="NC_000913.3"/>
</dbReference>
<dbReference type="RefSeq" id="WP_000286312.1">
    <property type="nucleotide sequence ID" value="NZ_SSZK01000002.1"/>
</dbReference>
<dbReference type="SMR" id="P75857"/>
<dbReference type="BioGRID" id="4263120">
    <property type="interactions" value="168"/>
</dbReference>
<dbReference type="FunCoup" id="P75857">
    <property type="interactions" value="210"/>
</dbReference>
<dbReference type="STRING" id="511145.b0940"/>
<dbReference type="PaxDb" id="511145-b0940"/>
<dbReference type="EnsemblBacteria" id="AAC74026">
    <property type="protein sequence ID" value="AAC74026"/>
    <property type="gene ID" value="b0940"/>
</dbReference>
<dbReference type="GeneID" id="946934"/>
<dbReference type="KEGG" id="ecj:JW0923"/>
<dbReference type="KEGG" id="eco:b0940"/>
<dbReference type="KEGG" id="ecoc:C3026_05765"/>
<dbReference type="PATRIC" id="fig|1411691.4.peg.1334"/>
<dbReference type="EchoBASE" id="EB3475"/>
<dbReference type="eggNOG" id="COG3188">
    <property type="taxonomic scope" value="Bacteria"/>
</dbReference>
<dbReference type="HOGENOM" id="CLU_009120_3_1_6"/>
<dbReference type="InParanoid" id="P75857"/>
<dbReference type="OMA" id="FQLTGYR"/>
<dbReference type="OrthoDB" id="6554712at2"/>
<dbReference type="PhylomeDB" id="P75857"/>
<dbReference type="BioCyc" id="EcoCyc:G6482-MONOMER"/>
<dbReference type="PRO" id="PR:P75857"/>
<dbReference type="Proteomes" id="UP000000625">
    <property type="component" value="Chromosome"/>
</dbReference>
<dbReference type="GO" id="GO:0009279">
    <property type="term" value="C:cell outer membrane"/>
    <property type="evidence" value="ECO:0000318"/>
    <property type="project" value="GO_Central"/>
</dbReference>
<dbReference type="GO" id="GO:0015473">
    <property type="term" value="F:fimbrial usher porin activity"/>
    <property type="evidence" value="ECO:0000318"/>
    <property type="project" value="GO_Central"/>
</dbReference>
<dbReference type="GO" id="GO:0008201">
    <property type="term" value="F:heparin binding"/>
    <property type="evidence" value="ECO:0000314"/>
    <property type="project" value="EcoCyc"/>
</dbReference>
<dbReference type="GO" id="GO:0009297">
    <property type="term" value="P:pilus assembly"/>
    <property type="evidence" value="ECO:0000318"/>
    <property type="project" value="GO_Central"/>
</dbReference>
<dbReference type="FunFam" id="2.60.40.2070:FF:000001">
    <property type="entry name" value="Fimbrial outer membrane usher protein"/>
    <property type="match status" value="1"/>
</dbReference>
<dbReference type="FunFam" id="2.60.40.2610:FF:000001">
    <property type="entry name" value="Outer membrane fimbrial usher protein"/>
    <property type="match status" value="1"/>
</dbReference>
<dbReference type="FunFam" id="3.10.20.410:FF:000002">
    <property type="entry name" value="Outer membrane usher protein FimD"/>
    <property type="match status" value="1"/>
</dbReference>
<dbReference type="FunFam" id="2.60.40.3110:FF:000001">
    <property type="entry name" value="Putative fimbrial outer membrane usher"/>
    <property type="match status" value="1"/>
</dbReference>
<dbReference type="Gene3D" id="2.60.40.2070">
    <property type="match status" value="1"/>
</dbReference>
<dbReference type="Gene3D" id="2.60.40.3110">
    <property type="match status" value="1"/>
</dbReference>
<dbReference type="Gene3D" id="3.10.20.410">
    <property type="match status" value="1"/>
</dbReference>
<dbReference type="Gene3D" id="2.60.40.2610">
    <property type="entry name" value="Outer membrane usher protein FimD, plug domain"/>
    <property type="match status" value="1"/>
</dbReference>
<dbReference type="InterPro" id="IPR000015">
    <property type="entry name" value="Fimb_usher"/>
</dbReference>
<dbReference type="InterPro" id="IPR018030">
    <property type="entry name" value="Fimbrial_membr_usher_CS"/>
</dbReference>
<dbReference type="InterPro" id="IPR042186">
    <property type="entry name" value="FimD_plug_dom"/>
</dbReference>
<dbReference type="InterPro" id="IPR025949">
    <property type="entry name" value="PapC-like_C"/>
</dbReference>
<dbReference type="InterPro" id="IPR043142">
    <property type="entry name" value="PapC-like_C_sf"/>
</dbReference>
<dbReference type="InterPro" id="IPR025885">
    <property type="entry name" value="PapC_N"/>
</dbReference>
<dbReference type="InterPro" id="IPR037224">
    <property type="entry name" value="PapC_N_sf"/>
</dbReference>
<dbReference type="NCBIfam" id="NF011740">
    <property type="entry name" value="PRK15193.1"/>
    <property type="match status" value="1"/>
</dbReference>
<dbReference type="PANTHER" id="PTHR30451:SF21">
    <property type="entry name" value="FIMBRIAL USHER DOMAIN-CONTAINING PROTEIN YDET-RELATED"/>
    <property type="match status" value="1"/>
</dbReference>
<dbReference type="PANTHER" id="PTHR30451">
    <property type="entry name" value="OUTER MEMBRANE USHER PROTEIN"/>
    <property type="match status" value="1"/>
</dbReference>
<dbReference type="Pfam" id="PF13953">
    <property type="entry name" value="PapC_C"/>
    <property type="match status" value="1"/>
</dbReference>
<dbReference type="Pfam" id="PF13954">
    <property type="entry name" value="PapC_N"/>
    <property type="match status" value="1"/>
</dbReference>
<dbReference type="Pfam" id="PF00577">
    <property type="entry name" value="Usher"/>
    <property type="match status" value="1"/>
</dbReference>
<dbReference type="SUPFAM" id="SSF141729">
    <property type="entry name" value="FimD N-terminal domain-like"/>
    <property type="match status" value="1"/>
</dbReference>
<dbReference type="PROSITE" id="PS01151">
    <property type="entry name" value="FIMBRIAL_USHER"/>
    <property type="match status" value="1"/>
</dbReference>
<organism>
    <name type="scientific">Escherichia coli (strain K12)</name>
    <dbReference type="NCBI Taxonomy" id="83333"/>
    <lineage>
        <taxon>Bacteria</taxon>
        <taxon>Pseudomonadati</taxon>
        <taxon>Pseudomonadota</taxon>
        <taxon>Gammaproteobacteria</taxon>
        <taxon>Enterobacterales</taxon>
        <taxon>Enterobacteriaceae</taxon>
        <taxon>Escherichia</taxon>
    </lineage>
</organism>
<proteinExistence type="evidence at transcript level"/>
<keyword id="KW-0998">Cell outer membrane</keyword>
<keyword id="KW-1029">Fimbrium biogenesis</keyword>
<keyword id="KW-0472">Membrane</keyword>
<keyword id="KW-1185">Reference proteome</keyword>
<keyword id="KW-0732">Signal</keyword>
<keyword id="KW-0812">Transmembrane</keyword>
<keyword id="KW-1134">Transmembrane beta strand</keyword>
<keyword id="KW-0813">Transport</keyword>
<reference key="1">
    <citation type="journal article" date="1996" name="DNA Res.">
        <title>A 718-kb DNA sequence of the Escherichia coli K-12 genome corresponding to the 12.7-28.0 min region on the linkage map.</title>
        <authorList>
            <person name="Oshima T."/>
            <person name="Aiba H."/>
            <person name="Baba T."/>
            <person name="Fujita K."/>
            <person name="Hayashi K."/>
            <person name="Honjo A."/>
            <person name="Ikemoto K."/>
            <person name="Inada T."/>
            <person name="Itoh T."/>
            <person name="Kajihara M."/>
            <person name="Kanai K."/>
            <person name="Kashimoto K."/>
            <person name="Kimura S."/>
            <person name="Kitagawa M."/>
            <person name="Makino K."/>
            <person name="Masuda S."/>
            <person name="Miki T."/>
            <person name="Mizobuchi K."/>
            <person name="Mori H."/>
            <person name="Motomura K."/>
            <person name="Nakamura Y."/>
            <person name="Nashimoto H."/>
            <person name="Nishio Y."/>
            <person name="Saito N."/>
            <person name="Sampei G."/>
            <person name="Seki Y."/>
            <person name="Tagami H."/>
            <person name="Takemoto K."/>
            <person name="Wada C."/>
            <person name="Yamamoto Y."/>
            <person name="Yano M."/>
            <person name="Horiuchi T."/>
        </authorList>
    </citation>
    <scope>NUCLEOTIDE SEQUENCE [LARGE SCALE GENOMIC DNA]</scope>
    <source>
        <strain>K12 / W3110 / ATCC 27325 / DSM 5911</strain>
    </source>
</reference>
<reference key="2">
    <citation type="journal article" date="1997" name="Science">
        <title>The complete genome sequence of Escherichia coli K-12.</title>
        <authorList>
            <person name="Blattner F.R."/>
            <person name="Plunkett G. III"/>
            <person name="Bloch C.A."/>
            <person name="Perna N.T."/>
            <person name="Burland V."/>
            <person name="Riley M."/>
            <person name="Collado-Vides J."/>
            <person name="Glasner J.D."/>
            <person name="Rode C.K."/>
            <person name="Mayhew G.F."/>
            <person name="Gregor J."/>
            <person name="Davis N.W."/>
            <person name="Kirkpatrick H.A."/>
            <person name="Goeden M.A."/>
            <person name="Rose D.J."/>
            <person name="Mau B."/>
            <person name="Shao Y."/>
        </authorList>
    </citation>
    <scope>NUCLEOTIDE SEQUENCE [LARGE SCALE GENOMIC DNA]</scope>
    <source>
        <strain>K12 / MG1655 / ATCC 47076</strain>
    </source>
</reference>
<reference key="3">
    <citation type="journal article" date="2006" name="Mol. Syst. Biol.">
        <title>Highly accurate genome sequences of Escherichia coli K-12 strains MG1655 and W3110.</title>
        <authorList>
            <person name="Hayashi K."/>
            <person name="Morooka N."/>
            <person name="Yamamoto Y."/>
            <person name="Fujita K."/>
            <person name="Isono K."/>
            <person name="Choi S."/>
            <person name="Ohtsubo E."/>
            <person name="Baba T."/>
            <person name="Wanner B.L."/>
            <person name="Mori H."/>
            <person name="Horiuchi T."/>
        </authorList>
    </citation>
    <scope>NUCLEOTIDE SEQUENCE [LARGE SCALE GENOMIC DNA]</scope>
    <source>
        <strain>K12 / W3110 / ATCC 27325 / DSM 5911</strain>
    </source>
</reference>
<reference key="4">
    <citation type="journal article" date="2010" name="Environ. Microbiol.">
        <title>Escherichia coli K-12 possesses multiple cryptic but functional chaperone-usher fimbriae with distinct surface specificities.</title>
        <authorList>
            <person name="Korea C.G."/>
            <person name="Badouraly R."/>
            <person name="Prevost M.C."/>
            <person name="Ghigo J.M."/>
            <person name="Beloin C."/>
        </authorList>
    </citation>
    <scope>FUNCTION</scope>
    <scope>INDUCTION</scope>
    <source>
        <strain>K12 / MG1655 / ATCC 47076</strain>
    </source>
</reference>